<proteinExistence type="evidence at protein level"/>
<accession>P62949</accession>
<accession>P28751</accession>
<protein>
    <recommendedName>
        <fullName evidence="4">Small ribosomal subunit protein eS32</fullName>
    </recommendedName>
    <alternativeName>
        <fullName>60S ribosomal protein L41</fullName>
    </alternativeName>
    <alternativeName>
        <fullName evidence="3">Large ribosomal subunit protein eL41</fullName>
    </alternativeName>
</protein>
<gene>
    <name type="primary">rpl41</name>
</gene>
<reference key="1">
    <citation type="journal article" date="1999" name="Genome Res.">
        <title>Analysis of 148 kb of genomic DNA around the wnt1 locus of Fugu rubripes.</title>
        <authorList>
            <person name="Gellner K."/>
            <person name="Brenner S."/>
        </authorList>
    </citation>
    <scope>NUCLEOTIDE SEQUENCE [GENOMIC DNA]</scope>
</reference>
<reference key="2">
    <citation type="unpublished observations" date="2023-10">
        <authorList>
            <person name="Leibundgut M.A."/>
            <person name="Ban N."/>
        </authorList>
    </citation>
    <scope>REVISION OF SUBUNIT</scope>
    <scope>NOMENCLATURE</scope>
</reference>
<sequence length="25" mass="3456">MRAKWRKKRMRRLKRKRRKMRQRSK</sequence>
<keyword id="KW-0963">Cytoplasm</keyword>
<keyword id="KW-1185">Reference proteome</keyword>
<keyword id="KW-0687">Ribonucleoprotein</keyword>
<keyword id="KW-0689">Ribosomal protein</keyword>
<comment type="function">
    <text evidence="1 4">Component of the small ribosomal subunit (Probable) (Ref.2). The ribosome is a large ribonucleoprotein complex responsible for the synthesis of proteins in the cell.</text>
</comment>
<comment type="subunit">
    <text evidence="4">Component of the large ribosomal subunit (Ref.2).</text>
</comment>
<comment type="subcellular location">
    <subcellularLocation>
        <location evidence="1">Cytoplasm</location>
    </subcellularLocation>
</comment>
<comment type="miscellaneous">
    <text evidence="4">Initially thought to be part of the large ribosomal subunit. Crystal structures show eS32/eL41 to be a small ribosomal subunit forming a bridge at the interface of the 2 subunits.</text>
</comment>
<comment type="similarity">
    <text evidence="3">Belongs to the eukaryotic ribosomal protein eS32 family.</text>
</comment>
<evidence type="ECO:0000250" key="1">
    <source>
        <dbReference type="UniProtKB" id="P62947"/>
    </source>
</evidence>
<evidence type="ECO:0000256" key="2">
    <source>
        <dbReference type="SAM" id="MobiDB-lite"/>
    </source>
</evidence>
<evidence type="ECO:0000305" key="3"/>
<evidence type="ECO:0000305" key="4">
    <source ref="2"/>
</evidence>
<feature type="chain" id="PRO_0000198060" description="Small ribosomal subunit protein eS32">
    <location>
        <begin position="1"/>
        <end position="25"/>
    </location>
</feature>
<feature type="region of interest" description="Disordered" evidence="2">
    <location>
        <begin position="1"/>
        <end position="25"/>
    </location>
</feature>
<organism>
    <name type="scientific">Takifugu rubripes</name>
    <name type="common">Japanese pufferfish</name>
    <name type="synonym">Fugu rubripes</name>
    <dbReference type="NCBI Taxonomy" id="31033"/>
    <lineage>
        <taxon>Eukaryota</taxon>
        <taxon>Metazoa</taxon>
        <taxon>Chordata</taxon>
        <taxon>Craniata</taxon>
        <taxon>Vertebrata</taxon>
        <taxon>Euteleostomi</taxon>
        <taxon>Actinopterygii</taxon>
        <taxon>Neopterygii</taxon>
        <taxon>Teleostei</taxon>
        <taxon>Neoteleostei</taxon>
        <taxon>Acanthomorphata</taxon>
        <taxon>Eupercaria</taxon>
        <taxon>Tetraodontiformes</taxon>
        <taxon>Tetradontoidea</taxon>
        <taxon>Tetraodontidae</taxon>
        <taxon>Takifugu</taxon>
    </lineage>
</organism>
<dbReference type="EMBL" id="AF056116">
    <property type="protein sequence ID" value="AAC34393.1"/>
    <property type="molecule type" value="Genomic_DNA"/>
</dbReference>
<dbReference type="SMR" id="P62949"/>
<dbReference type="InParanoid" id="P62949"/>
<dbReference type="Proteomes" id="UP000005226">
    <property type="component" value="Unplaced"/>
</dbReference>
<dbReference type="GO" id="GO:0005737">
    <property type="term" value="C:cytoplasm"/>
    <property type="evidence" value="ECO:0007669"/>
    <property type="project" value="UniProtKB-SubCell"/>
</dbReference>
<dbReference type="GO" id="GO:1990904">
    <property type="term" value="C:ribonucleoprotein complex"/>
    <property type="evidence" value="ECO:0007669"/>
    <property type="project" value="UniProtKB-KW"/>
</dbReference>
<dbReference type="GO" id="GO:0005840">
    <property type="term" value="C:ribosome"/>
    <property type="evidence" value="ECO:0007669"/>
    <property type="project" value="UniProtKB-KW"/>
</dbReference>
<dbReference type="GO" id="GO:0003735">
    <property type="term" value="F:structural constituent of ribosome"/>
    <property type="evidence" value="ECO:0007669"/>
    <property type="project" value="InterPro"/>
</dbReference>
<dbReference type="GO" id="GO:0006412">
    <property type="term" value="P:translation"/>
    <property type="evidence" value="ECO:0007669"/>
    <property type="project" value="InterPro"/>
</dbReference>
<dbReference type="InterPro" id="IPR007836">
    <property type="entry name" value="Ribosomal_eS32"/>
</dbReference>
<dbReference type="Pfam" id="PF05162">
    <property type="entry name" value="Ribosomal_L41"/>
    <property type="match status" value="1"/>
</dbReference>
<name>RS32_TAKRU</name>